<gene>
    <name evidence="1" type="primary">efp</name>
    <name type="ordered locus">EF_0287</name>
</gene>
<accession>Q838Z5</accession>
<comment type="function">
    <text evidence="1">Involved in peptide bond synthesis. Stimulates efficient translation and peptide-bond synthesis on native or reconstituted 70S ribosomes in vitro. Probably functions indirectly by altering the affinity of the ribosome for aminoacyl-tRNA, thus increasing their reactivity as acceptors for peptidyl transferase.</text>
</comment>
<comment type="pathway">
    <text evidence="1">Protein biosynthesis; polypeptide chain elongation.</text>
</comment>
<comment type="subcellular location">
    <subcellularLocation>
        <location evidence="1">Cytoplasm</location>
    </subcellularLocation>
</comment>
<comment type="similarity">
    <text evidence="1">Belongs to the elongation factor P family.</text>
</comment>
<reference key="1">
    <citation type="journal article" date="2003" name="Science">
        <title>Role of mobile DNA in the evolution of vancomycin-resistant Enterococcus faecalis.</title>
        <authorList>
            <person name="Paulsen I.T."/>
            <person name="Banerjei L."/>
            <person name="Myers G.S.A."/>
            <person name="Nelson K.E."/>
            <person name="Seshadri R."/>
            <person name="Read T.D."/>
            <person name="Fouts D.E."/>
            <person name="Eisen J.A."/>
            <person name="Gill S.R."/>
            <person name="Heidelberg J.F."/>
            <person name="Tettelin H."/>
            <person name="Dodson R.J."/>
            <person name="Umayam L.A."/>
            <person name="Brinkac L.M."/>
            <person name="Beanan M.J."/>
            <person name="Daugherty S.C."/>
            <person name="DeBoy R.T."/>
            <person name="Durkin S.A."/>
            <person name="Kolonay J.F."/>
            <person name="Madupu R."/>
            <person name="Nelson W.C."/>
            <person name="Vamathevan J.J."/>
            <person name="Tran B."/>
            <person name="Upton J."/>
            <person name="Hansen T."/>
            <person name="Shetty J."/>
            <person name="Khouri H.M."/>
            <person name="Utterback T.R."/>
            <person name="Radune D."/>
            <person name="Ketchum K.A."/>
            <person name="Dougherty B.A."/>
            <person name="Fraser C.M."/>
        </authorList>
    </citation>
    <scope>NUCLEOTIDE SEQUENCE [LARGE SCALE GENOMIC DNA]</scope>
    <source>
        <strain>ATCC 700802 / V583</strain>
    </source>
</reference>
<keyword id="KW-0963">Cytoplasm</keyword>
<keyword id="KW-0251">Elongation factor</keyword>
<keyword id="KW-0648">Protein biosynthesis</keyword>
<keyword id="KW-1185">Reference proteome</keyword>
<name>EFP_ENTFA</name>
<dbReference type="EMBL" id="AE016830">
    <property type="protein sequence ID" value="AAO80150.1"/>
    <property type="molecule type" value="Genomic_DNA"/>
</dbReference>
<dbReference type="RefSeq" id="NP_814079.1">
    <property type="nucleotide sequence ID" value="NC_004668.1"/>
</dbReference>
<dbReference type="RefSeq" id="WP_002355202.1">
    <property type="nucleotide sequence ID" value="NZ_KE136524.1"/>
</dbReference>
<dbReference type="SMR" id="Q838Z5"/>
<dbReference type="STRING" id="226185.EF_0287"/>
<dbReference type="EnsemblBacteria" id="AAO80150">
    <property type="protein sequence ID" value="AAO80150"/>
    <property type="gene ID" value="EF_0287"/>
</dbReference>
<dbReference type="GeneID" id="60892796"/>
<dbReference type="KEGG" id="efa:EF0287"/>
<dbReference type="PATRIC" id="fig|226185.45.peg.3042"/>
<dbReference type="eggNOG" id="COG0231">
    <property type="taxonomic scope" value="Bacteria"/>
</dbReference>
<dbReference type="HOGENOM" id="CLU_074944_3_0_9"/>
<dbReference type="UniPathway" id="UPA00345"/>
<dbReference type="Proteomes" id="UP000001415">
    <property type="component" value="Chromosome"/>
</dbReference>
<dbReference type="GO" id="GO:0005737">
    <property type="term" value="C:cytoplasm"/>
    <property type="evidence" value="ECO:0007669"/>
    <property type="project" value="UniProtKB-SubCell"/>
</dbReference>
<dbReference type="GO" id="GO:0003746">
    <property type="term" value="F:translation elongation factor activity"/>
    <property type="evidence" value="ECO:0007669"/>
    <property type="project" value="UniProtKB-UniRule"/>
</dbReference>
<dbReference type="GO" id="GO:0043043">
    <property type="term" value="P:peptide biosynthetic process"/>
    <property type="evidence" value="ECO:0007669"/>
    <property type="project" value="InterPro"/>
</dbReference>
<dbReference type="CDD" id="cd04470">
    <property type="entry name" value="S1_EF-P_repeat_1"/>
    <property type="match status" value="1"/>
</dbReference>
<dbReference type="CDD" id="cd05794">
    <property type="entry name" value="S1_EF-P_repeat_2"/>
    <property type="match status" value="1"/>
</dbReference>
<dbReference type="FunFam" id="2.30.30.30:FF:000003">
    <property type="entry name" value="Elongation factor P"/>
    <property type="match status" value="1"/>
</dbReference>
<dbReference type="FunFam" id="2.40.50.140:FF:000004">
    <property type="entry name" value="Elongation factor P"/>
    <property type="match status" value="1"/>
</dbReference>
<dbReference type="FunFam" id="2.40.50.140:FF:000009">
    <property type="entry name" value="Elongation factor P"/>
    <property type="match status" value="1"/>
</dbReference>
<dbReference type="Gene3D" id="2.30.30.30">
    <property type="match status" value="1"/>
</dbReference>
<dbReference type="Gene3D" id="2.40.50.140">
    <property type="entry name" value="Nucleic acid-binding proteins"/>
    <property type="match status" value="2"/>
</dbReference>
<dbReference type="HAMAP" id="MF_00141">
    <property type="entry name" value="EF_P"/>
    <property type="match status" value="1"/>
</dbReference>
<dbReference type="InterPro" id="IPR015365">
    <property type="entry name" value="Elong-fact-P_C"/>
</dbReference>
<dbReference type="InterPro" id="IPR012340">
    <property type="entry name" value="NA-bd_OB-fold"/>
</dbReference>
<dbReference type="InterPro" id="IPR014722">
    <property type="entry name" value="Rib_uL2_dom2"/>
</dbReference>
<dbReference type="InterPro" id="IPR020599">
    <property type="entry name" value="Transl_elong_fac_P/YeiP"/>
</dbReference>
<dbReference type="InterPro" id="IPR013185">
    <property type="entry name" value="Transl_elong_KOW-like"/>
</dbReference>
<dbReference type="InterPro" id="IPR001059">
    <property type="entry name" value="Transl_elong_P/YeiP_cen"/>
</dbReference>
<dbReference type="InterPro" id="IPR013852">
    <property type="entry name" value="Transl_elong_P/YeiP_CS"/>
</dbReference>
<dbReference type="InterPro" id="IPR011768">
    <property type="entry name" value="Transl_elongation_fac_P"/>
</dbReference>
<dbReference type="InterPro" id="IPR008991">
    <property type="entry name" value="Translation_prot_SH3-like_sf"/>
</dbReference>
<dbReference type="NCBIfam" id="TIGR00038">
    <property type="entry name" value="efp"/>
    <property type="match status" value="1"/>
</dbReference>
<dbReference type="NCBIfam" id="NF001810">
    <property type="entry name" value="PRK00529.1"/>
    <property type="match status" value="1"/>
</dbReference>
<dbReference type="PANTHER" id="PTHR30053">
    <property type="entry name" value="ELONGATION FACTOR P"/>
    <property type="match status" value="1"/>
</dbReference>
<dbReference type="PANTHER" id="PTHR30053:SF12">
    <property type="entry name" value="ELONGATION FACTOR P (EF-P) FAMILY PROTEIN"/>
    <property type="match status" value="1"/>
</dbReference>
<dbReference type="Pfam" id="PF01132">
    <property type="entry name" value="EFP"/>
    <property type="match status" value="1"/>
</dbReference>
<dbReference type="Pfam" id="PF08207">
    <property type="entry name" value="EFP_N"/>
    <property type="match status" value="1"/>
</dbReference>
<dbReference type="Pfam" id="PF09285">
    <property type="entry name" value="Elong-fact-P_C"/>
    <property type="match status" value="1"/>
</dbReference>
<dbReference type="PIRSF" id="PIRSF005901">
    <property type="entry name" value="EF-P"/>
    <property type="match status" value="1"/>
</dbReference>
<dbReference type="SMART" id="SM01185">
    <property type="entry name" value="EFP"/>
    <property type="match status" value="1"/>
</dbReference>
<dbReference type="SMART" id="SM00841">
    <property type="entry name" value="Elong-fact-P_C"/>
    <property type="match status" value="1"/>
</dbReference>
<dbReference type="SUPFAM" id="SSF50249">
    <property type="entry name" value="Nucleic acid-binding proteins"/>
    <property type="match status" value="2"/>
</dbReference>
<dbReference type="SUPFAM" id="SSF50104">
    <property type="entry name" value="Translation proteins SH3-like domain"/>
    <property type="match status" value="1"/>
</dbReference>
<dbReference type="PROSITE" id="PS01275">
    <property type="entry name" value="EFP"/>
    <property type="match status" value="1"/>
</dbReference>
<organism>
    <name type="scientific">Enterococcus faecalis (strain ATCC 700802 / V583)</name>
    <dbReference type="NCBI Taxonomy" id="226185"/>
    <lineage>
        <taxon>Bacteria</taxon>
        <taxon>Bacillati</taxon>
        <taxon>Bacillota</taxon>
        <taxon>Bacilli</taxon>
        <taxon>Lactobacillales</taxon>
        <taxon>Enterococcaceae</taxon>
        <taxon>Enterococcus</taxon>
    </lineage>
</organism>
<protein>
    <recommendedName>
        <fullName evidence="1">Elongation factor P</fullName>
        <shortName evidence="1">EF-P</shortName>
    </recommendedName>
</protein>
<feature type="chain" id="PRO_0000094248" description="Elongation factor P">
    <location>
        <begin position="1"/>
        <end position="186"/>
    </location>
</feature>
<sequence length="186" mass="20736">MIAASDLKAGMTFEQDGKLIKVMEASHHKPGKGNTVMRMKLKDVRTGSTTDTTMRPDEKVKKAHIDTKPVQYLYSQDDMAIFMDLETYEQYEVPTALIEEELKYLLENMEVKIQFYGEEVIGLTLPTTVILRVAETQPSIKGATVTGSGKPATMETGLVVNVPDFVEADELLEINTAEGTYLKRAK</sequence>
<evidence type="ECO:0000255" key="1">
    <source>
        <dbReference type="HAMAP-Rule" id="MF_00141"/>
    </source>
</evidence>
<proteinExistence type="inferred from homology"/>